<proteinExistence type="evidence at transcript level"/>
<sequence>FALAHMVNDLEMVDEFVGKGANGLEIDVTFSSAGQPEYTYHGVPCDCFRNCKRREDFDTYIKYIRHLATPGDPKFRSNLIMLIFDLKLNGLSQDALRSAGKEMADKLVGNYWQDLAEARAYIVLSMPSIEQADFVTAFKDELKDFGYDKNLDRIGYDFSGNEDLGETAKVYEKLNIHEHIWQADGITNCLPRGDSRLKEAISKRDTPGYQYINKVYTWTIDKSGSIANALRLGVDGVMTNYPERVIDALNDSEFSGKLRLATYEDNPWETFKG</sequence>
<accession>C0JB51</accession>
<protein>
    <recommendedName>
        <fullName evidence="7">Dermonecrotic toxin LafSicTox-betaIE1</fullName>
        <ecNumber evidence="4">4.6.1.-</ecNumber>
    </recommendedName>
    <alternativeName>
        <fullName>Phospholipase D</fullName>
        <shortName>PLD</shortName>
    </alternativeName>
    <alternativeName>
        <fullName>Sphingomyelin phosphodiesterase D</fullName>
        <shortName>SMD</shortName>
        <shortName>SMase D</shortName>
        <shortName>Sphingomyelinase D</shortName>
    </alternativeName>
</protein>
<organism>
    <name type="scientific">Loxosceles aff. spinulosa (strain GJB-2008)</name>
    <name type="common">Recluse spider</name>
    <dbReference type="NCBI Taxonomy" id="575951"/>
    <lineage>
        <taxon>Eukaryota</taxon>
        <taxon>Metazoa</taxon>
        <taxon>Ecdysozoa</taxon>
        <taxon>Arthropoda</taxon>
        <taxon>Chelicerata</taxon>
        <taxon>Arachnida</taxon>
        <taxon>Araneae</taxon>
        <taxon>Araneomorphae</taxon>
        <taxon>Haplogynae</taxon>
        <taxon>Scytodoidea</taxon>
        <taxon>Sicariidae</taxon>
        <taxon>Loxosceles</taxon>
    </lineage>
</organism>
<name>B1R_LOXAS</name>
<dbReference type="EC" id="4.6.1.-" evidence="4"/>
<dbReference type="EMBL" id="FJ171486">
    <property type="protein sequence ID" value="ACN48982.1"/>
    <property type="molecule type" value="mRNA"/>
</dbReference>
<dbReference type="SMR" id="C0JB51"/>
<dbReference type="GO" id="GO:0005576">
    <property type="term" value="C:extracellular region"/>
    <property type="evidence" value="ECO:0007669"/>
    <property type="project" value="UniProtKB-SubCell"/>
</dbReference>
<dbReference type="GO" id="GO:0016829">
    <property type="term" value="F:lyase activity"/>
    <property type="evidence" value="ECO:0007669"/>
    <property type="project" value="UniProtKB-KW"/>
</dbReference>
<dbReference type="GO" id="GO:0046872">
    <property type="term" value="F:metal ion binding"/>
    <property type="evidence" value="ECO:0007669"/>
    <property type="project" value="UniProtKB-KW"/>
</dbReference>
<dbReference type="GO" id="GO:0008081">
    <property type="term" value="F:phosphoric diester hydrolase activity"/>
    <property type="evidence" value="ECO:0007669"/>
    <property type="project" value="InterPro"/>
</dbReference>
<dbReference type="GO" id="GO:0090729">
    <property type="term" value="F:toxin activity"/>
    <property type="evidence" value="ECO:0007669"/>
    <property type="project" value="UniProtKB-KW"/>
</dbReference>
<dbReference type="GO" id="GO:0031640">
    <property type="term" value="P:killing of cells of another organism"/>
    <property type="evidence" value="ECO:0007669"/>
    <property type="project" value="UniProtKB-KW"/>
</dbReference>
<dbReference type="GO" id="GO:0016042">
    <property type="term" value="P:lipid catabolic process"/>
    <property type="evidence" value="ECO:0007669"/>
    <property type="project" value="UniProtKB-KW"/>
</dbReference>
<dbReference type="CDD" id="cd08576">
    <property type="entry name" value="GDPD_like_SMaseD_PLD"/>
    <property type="match status" value="1"/>
</dbReference>
<dbReference type="Gene3D" id="3.20.20.190">
    <property type="entry name" value="Phosphatidylinositol (PI) phosphodiesterase"/>
    <property type="match status" value="1"/>
</dbReference>
<dbReference type="InterPro" id="IPR017946">
    <property type="entry name" value="PLC-like_Pdiesterase_TIM-brl"/>
</dbReference>
<dbReference type="Pfam" id="PF13653">
    <property type="entry name" value="GDPD_2"/>
    <property type="match status" value="1"/>
</dbReference>
<dbReference type="SUPFAM" id="SSF51695">
    <property type="entry name" value="PLC-like phosphodiesterases"/>
    <property type="match status" value="1"/>
</dbReference>
<evidence type="ECO:0000250" key="1">
    <source>
        <dbReference type="UniProtKB" id="A0A0D4WTV1"/>
    </source>
</evidence>
<evidence type="ECO:0000250" key="2">
    <source>
        <dbReference type="UniProtKB" id="A0A0D4WV12"/>
    </source>
</evidence>
<evidence type="ECO:0000250" key="3">
    <source>
        <dbReference type="UniProtKB" id="P0CE80"/>
    </source>
</evidence>
<evidence type="ECO:0000250" key="4">
    <source>
        <dbReference type="UniProtKB" id="Q4ZFU2"/>
    </source>
</evidence>
<evidence type="ECO:0000250" key="5">
    <source>
        <dbReference type="UniProtKB" id="Q8I914"/>
    </source>
</evidence>
<evidence type="ECO:0000255" key="6"/>
<evidence type="ECO:0000303" key="7">
    <source>
    </source>
</evidence>
<evidence type="ECO:0000305" key="8"/>
<evidence type="ECO:0000305" key="9">
    <source>
    </source>
</evidence>
<keyword id="KW-0204">Cytolysis</keyword>
<keyword id="KW-1061">Dermonecrotic toxin</keyword>
<keyword id="KW-1015">Disulfide bond</keyword>
<keyword id="KW-0325">Glycoprotein</keyword>
<keyword id="KW-0354">Hemolysis</keyword>
<keyword id="KW-0442">Lipid degradation</keyword>
<keyword id="KW-0443">Lipid metabolism</keyword>
<keyword id="KW-0456">Lyase</keyword>
<keyword id="KW-0460">Magnesium</keyword>
<keyword id="KW-0479">Metal-binding</keyword>
<keyword id="KW-0964">Secreted</keyword>
<keyword id="KW-0800">Toxin</keyword>
<comment type="function">
    <text evidence="1 3">Dermonecrotic toxins cleave the phosphodiester linkage between the phosphate and headgroup of certain phospholipids (sphingolipid and lysolipid substrates), forming an alcohol (often choline) and a cyclic phosphate (By similarity). This toxin acts on sphingomyelin (SM) (By similarity). It may also act on ceramide phosphoethanolamine (CPE), lysophosphatidylcholine (LPC) and lysophosphatidylethanolamine (LPE), but not on lysophosphatidylserine (LPS), and lysophosphatidylglycerol (LPG) (By similarity). It acts by transphosphatidylation, releasing exclusively cyclic phosphate products as second products (By similarity). Induces dermonecrosis, hemolysis, increased vascular permeability, edema, inflammatory response, and platelet aggregation (By similarity).</text>
</comment>
<comment type="catalytic activity">
    <reaction evidence="1">
        <text>an N-(acyl)-sphingosylphosphocholine = an N-(acyl)-sphingosyl-1,3-cyclic phosphate + choline</text>
        <dbReference type="Rhea" id="RHEA:60652"/>
        <dbReference type="ChEBI" id="CHEBI:15354"/>
        <dbReference type="ChEBI" id="CHEBI:64583"/>
        <dbReference type="ChEBI" id="CHEBI:143892"/>
    </reaction>
</comment>
<comment type="catalytic activity">
    <reaction evidence="1">
        <text>an N-(acyl)-sphingosylphosphoethanolamine = an N-(acyl)-sphingosyl-1,3-cyclic phosphate + ethanolamine</text>
        <dbReference type="Rhea" id="RHEA:60648"/>
        <dbReference type="ChEBI" id="CHEBI:57603"/>
        <dbReference type="ChEBI" id="CHEBI:143891"/>
        <dbReference type="ChEBI" id="CHEBI:143892"/>
    </reaction>
</comment>
<comment type="catalytic activity">
    <reaction evidence="1">
        <text>a 1-acyl-sn-glycero-3-phosphocholine = a 1-acyl-sn-glycero-2,3-cyclic phosphate + choline</text>
        <dbReference type="Rhea" id="RHEA:60700"/>
        <dbReference type="ChEBI" id="CHEBI:15354"/>
        <dbReference type="ChEBI" id="CHEBI:58168"/>
        <dbReference type="ChEBI" id="CHEBI:143947"/>
    </reaction>
</comment>
<comment type="catalytic activity">
    <reaction evidence="1">
        <text>a 1-acyl-sn-glycero-3-phosphoethanolamine = a 1-acyl-sn-glycero-2,3-cyclic phosphate + ethanolamine</text>
        <dbReference type="Rhea" id="RHEA:60704"/>
        <dbReference type="ChEBI" id="CHEBI:57603"/>
        <dbReference type="ChEBI" id="CHEBI:64381"/>
        <dbReference type="ChEBI" id="CHEBI:143947"/>
    </reaction>
</comment>
<comment type="cofactor">
    <cofactor evidence="5">
        <name>Mg(2+)</name>
        <dbReference type="ChEBI" id="CHEBI:18420"/>
    </cofactor>
    <text evidence="5">Binds 1 Mg(2+) ion per subunit.</text>
</comment>
<comment type="subcellular location">
    <subcellularLocation>
        <location evidence="9">Secreted</location>
    </subcellularLocation>
</comment>
<comment type="tissue specificity">
    <text evidence="9">Expressed by the venom gland.</text>
</comment>
<comment type="similarity">
    <text evidence="8">Belongs to the arthropod phospholipase D family. Class II subfamily.</text>
</comment>
<comment type="caution">
    <text evidence="1 2 4">The most common activity assay for dermonecrotic toxins detects enzymatic activity by monitoring choline release from substrate. Liberation of choline from sphingomyelin (SM) or lysophosphatidylcholine (LPC) is commonly assumed to result from substrate hydrolysis, giving either ceramide-1-phosphate (C1P) or lysophosphatidic acid (LPA), respectively, as a second product. However, two studies from Lajoie and colleagues (2013 and 2015) report the observation of exclusive formation of cyclic phosphate products as second products, resulting from intramolecular transphosphatidylation. Cyclic phosphates have vastly different biological properties from their monoester counterparts, and they may be relevant to the pathology of brown spider envenomation.</text>
</comment>
<reference key="1">
    <citation type="journal article" date="2009" name="Mol. Biol. Evol.">
        <title>Molecular evolution, functional variation, and proposed nomenclature of the gene family that includes sphingomyelinase D in sicariid spider venoms.</title>
        <authorList>
            <person name="Binford G.J."/>
            <person name="Bodner M.R."/>
            <person name="Cordes M.H."/>
            <person name="Baldwin K.L."/>
            <person name="Rynerson M.R."/>
            <person name="Burns S.N."/>
            <person name="Zobel-Thropp P.A."/>
        </authorList>
    </citation>
    <scope>NUCLEOTIDE SEQUENCE [MRNA]</scope>
    <scope>NOMENCLATURE</scope>
    <source>
        <strain>Ruacana</strain>
        <tissue>Venom gland</tissue>
    </source>
</reference>
<feature type="chain" id="PRO_0000392858" description="Dermonecrotic toxin LafSicTox-betaIE1">
    <location>
        <begin position="1" status="less than"/>
        <end position="273"/>
    </location>
</feature>
<feature type="active site" evidence="5">
    <location>
        <position position="5"/>
    </location>
</feature>
<feature type="active site" description="Nucleophile" evidence="5">
    <location>
        <position position="41"/>
    </location>
</feature>
<feature type="binding site" evidence="5">
    <location>
        <position position="25"/>
    </location>
    <ligand>
        <name>Mg(2+)</name>
        <dbReference type="ChEBI" id="CHEBI:18420"/>
    </ligand>
</feature>
<feature type="binding site" evidence="5">
    <location>
        <position position="27"/>
    </location>
    <ligand>
        <name>Mg(2+)</name>
        <dbReference type="ChEBI" id="CHEBI:18420"/>
    </ligand>
</feature>
<feature type="binding site" evidence="5">
    <location>
        <position position="85"/>
    </location>
    <ligand>
        <name>Mg(2+)</name>
        <dbReference type="ChEBI" id="CHEBI:18420"/>
    </ligand>
</feature>
<feature type="glycosylation site" description="N-linked (GlcNAc...) asparagine" evidence="6">
    <location>
        <position position="250"/>
    </location>
</feature>
<feature type="disulfide bond" evidence="3">
    <location>
        <begin position="45"/>
        <end position="51"/>
    </location>
</feature>
<feature type="disulfide bond" evidence="3">
    <location>
        <begin position="47"/>
        <end position="189"/>
    </location>
</feature>
<feature type="non-terminal residue">
    <location>
        <position position="1"/>
    </location>
</feature>